<evidence type="ECO:0000256" key="1">
    <source>
        <dbReference type="SAM" id="MobiDB-lite"/>
    </source>
</evidence>
<accession>P0CW88</accession>
<accession>P37697</accession>
<feature type="chain" id="PRO_0000089428" description="Cellulose-complementing protein">
    <location>
        <begin position="1"/>
        <end position="353"/>
    </location>
</feature>
<feature type="region of interest" description="Disordered" evidence="1">
    <location>
        <begin position="1"/>
        <end position="21"/>
    </location>
</feature>
<feature type="region of interest" description="Disordered" evidence="1">
    <location>
        <begin position="75"/>
        <end position="94"/>
    </location>
</feature>
<feature type="region of interest" description="Disordered" evidence="1">
    <location>
        <begin position="117"/>
        <end position="337"/>
    </location>
</feature>
<feature type="compositionally biased region" description="Pro residues" evidence="1">
    <location>
        <begin position="80"/>
        <end position="91"/>
    </location>
</feature>
<feature type="compositionally biased region" description="Low complexity" evidence="1">
    <location>
        <begin position="117"/>
        <end position="132"/>
    </location>
</feature>
<feature type="compositionally biased region" description="Low complexity" evidence="1">
    <location>
        <begin position="142"/>
        <end position="164"/>
    </location>
</feature>
<feature type="compositionally biased region" description="Pro residues" evidence="1">
    <location>
        <begin position="165"/>
        <end position="175"/>
    </location>
</feature>
<feature type="compositionally biased region" description="Polar residues" evidence="1">
    <location>
        <begin position="196"/>
        <end position="226"/>
    </location>
</feature>
<feature type="compositionally biased region" description="Polar residues" evidence="1">
    <location>
        <begin position="278"/>
        <end position="304"/>
    </location>
</feature>
<organism>
    <name type="scientific">Novacetimonas hansenii</name>
    <name type="common">Komagataeibacter hansenii</name>
    <dbReference type="NCBI Taxonomy" id="436"/>
    <lineage>
        <taxon>Bacteria</taxon>
        <taxon>Pseudomonadati</taxon>
        <taxon>Pseudomonadota</taxon>
        <taxon>Alphaproteobacteria</taxon>
        <taxon>Acetobacterales</taxon>
        <taxon>Acetobacteraceae</taxon>
        <taxon>Novacetimonas</taxon>
    </lineage>
</organism>
<proteinExistence type="predicted"/>
<protein>
    <recommendedName>
        <fullName>Cellulose-complementing protein</fullName>
    </recommendedName>
</protein>
<sequence>MSASGSDEVAGGGQAGSPQDFQRVLRSFGVEGGQYSYRPFVDRSFDVTGVPEAVERHFDQAEHDTAVEEQVTPAPQIAVAPPPPPVVPDPPAIVTETAPPPPVVVSAPVTYEPPAAAVPAEPPVQEAPVQAAPVPPAPVPPIAEQAPPAAPDPASVPYANVAAAPVPPDPAPVTPAPQARVTGPNTRMVEPFSRPQVRTVQEGATPSRVPSRSMNAFPRTSASSISERPVDRGVADEWSPVPKARLSPRERPRPGDLSFFFQGMRDTRDEKKFFPVASTRSVRSNVSRMTSMTKTDTNSSQASRPGSPVASPDGSPTMAEVFMTLGGRATELLSPRPSLREALLRRRENEEES</sequence>
<name>CCPA_NOVHA</name>
<reference key="1">
    <citation type="journal article" date="1994" name="J. Bacteriol.">
        <title>A new gene required for cellulose production and a gene encoding cellulolytic activity in Acetobacter xylinum are colocalized with the bcs operon.</title>
        <authorList>
            <person name="Standal R."/>
            <person name="Iversen T.-G."/>
            <person name="Coucheron D.H."/>
            <person name="Fjaervik E."/>
            <person name="Blatny J.M."/>
            <person name="Valla S."/>
        </authorList>
    </citation>
    <scope>NUCLEOTIDE SEQUENCE [GENOMIC DNA]</scope>
    <source>
        <strain>ATCC 23769 / NCIMB 8246</strain>
    </source>
</reference>
<dbReference type="EMBL" id="M96060">
    <property type="protein sequence ID" value="AAA16970.1"/>
    <property type="molecule type" value="Unassigned_DNA"/>
</dbReference>
<dbReference type="PIR" id="B36963">
    <property type="entry name" value="B36963"/>
</dbReference>
<dbReference type="SMR" id="P0CW88"/>
<dbReference type="InterPro" id="IPR031480">
    <property type="entry name" value="CcpAX"/>
</dbReference>
<dbReference type="Pfam" id="PF17040">
    <property type="entry name" value="CBP_CCPA"/>
    <property type="match status" value="1"/>
</dbReference>
<gene>
    <name type="primary">ccpAX</name>
</gene>